<organism>
    <name type="scientific">Saccharomyces cerevisiae (strain ATCC 204508 / S288c)</name>
    <name type="common">Baker's yeast</name>
    <dbReference type="NCBI Taxonomy" id="559292"/>
    <lineage>
        <taxon>Eukaryota</taxon>
        <taxon>Fungi</taxon>
        <taxon>Dikarya</taxon>
        <taxon>Ascomycota</taxon>
        <taxon>Saccharomycotina</taxon>
        <taxon>Saccharomycetes</taxon>
        <taxon>Saccharomycetales</taxon>
        <taxon>Saccharomycetaceae</taxon>
        <taxon>Saccharomyces</taxon>
    </lineage>
</organism>
<gene>
    <name evidence="4" type="ordered locus">YER067C-A</name>
</gene>
<proteinExistence type="uncertain"/>
<keyword id="KW-0472">Membrane</keyword>
<keyword id="KW-0812">Transmembrane</keyword>
<keyword id="KW-1133">Transmembrane helix</keyword>
<dbReference type="EMBL" id="KJ412230">
    <property type="protein sequence ID" value="AHX39273.1"/>
    <property type="molecule type" value="Genomic_DNA"/>
</dbReference>
<dbReference type="PaxDb" id="4932-YER067C-A"/>
<dbReference type="EnsemblFungi" id="YER067C-A_mRNA">
    <property type="protein sequence ID" value="YER067C-A"/>
    <property type="gene ID" value="YER067C-A"/>
</dbReference>
<dbReference type="AGR" id="SGD:S000028748"/>
<dbReference type="SGD" id="S000028748">
    <property type="gene designation" value="YER067C-A"/>
</dbReference>
<dbReference type="HOGENOM" id="CLU_2211456_0_0_1"/>
<dbReference type="GO" id="GO:0016020">
    <property type="term" value="C:membrane"/>
    <property type="evidence" value="ECO:0007669"/>
    <property type="project" value="UniProtKB-SubCell"/>
</dbReference>
<comment type="subcellular location">
    <subcellularLocation>
        <location evidence="1">Membrane</location>
        <topology evidence="1">Single-pass membrane protein</topology>
    </subcellularLocation>
</comment>
<comment type="miscellaneous">
    <text evidence="2">Partially overlaps RGI1.</text>
</comment>
<comment type="caution">
    <text evidence="3">Product of a dubious gene prediction unlikely to encode a functional protein. Because of that it is not part of the S.cerevisiae S288c complete/reference proteome set.</text>
</comment>
<accession>A0A023PYE4</accession>
<name>YE067_YEAST</name>
<feature type="chain" id="PRO_0000430993" description="Putative uncharacterized membrane protein YER067C-A">
    <location>
        <begin position="1"/>
        <end position="107"/>
    </location>
</feature>
<feature type="transmembrane region" description="Helical" evidence="1">
    <location>
        <begin position="37"/>
        <end position="59"/>
    </location>
</feature>
<sequence>MTQPLICAYRMCFVIDKYHSIFMCANYLNVYLERSTMVFSFLTVMPGDFIKCLFLRFFVKFKLRFPNGLLNIFQKMLFNMLVQVTHELLRMRICSITNFFRVLVRLV</sequence>
<evidence type="ECO:0000255" key="1"/>
<evidence type="ECO:0000305" key="2"/>
<evidence type="ECO:0000305" key="3">
    <source>
    </source>
</evidence>
<evidence type="ECO:0000312" key="4">
    <source>
        <dbReference type="SGD" id="S000028748"/>
    </source>
</evidence>
<reference key="1">
    <citation type="journal article" date="1997" name="Nature">
        <title>The nucleotide sequence of Saccharomyces cerevisiae chromosome V.</title>
        <authorList>
            <person name="Dietrich F.S."/>
            <person name="Mulligan J.T."/>
            <person name="Hennessy K.M."/>
            <person name="Yelton M.A."/>
            <person name="Allen E."/>
            <person name="Araujo R."/>
            <person name="Aviles E."/>
            <person name="Berno A."/>
            <person name="Brennan T."/>
            <person name="Carpenter J."/>
            <person name="Chen E."/>
            <person name="Cherry J.M."/>
            <person name="Chung E."/>
            <person name="Duncan M."/>
            <person name="Guzman E."/>
            <person name="Hartzell G."/>
            <person name="Hunicke-Smith S."/>
            <person name="Hyman R.W."/>
            <person name="Kayser A."/>
            <person name="Komp C."/>
            <person name="Lashkari D."/>
            <person name="Lew H."/>
            <person name="Lin D."/>
            <person name="Mosedale D."/>
            <person name="Nakahara K."/>
            <person name="Namath A."/>
            <person name="Norgren R."/>
            <person name="Oefner P."/>
            <person name="Oh C."/>
            <person name="Petel F.X."/>
            <person name="Roberts D."/>
            <person name="Sehl P."/>
            <person name="Schramm S."/>
            <person name="Shogren T."/>
            <person name="Smith V."/>
            <person name="Taylor P."/>
            <person name="Wei Y."/>
            <person name="Botstein D."/>
            <person name="Davis R.W."/>
        </authorList>
    </citation>
    <scope>NUCLEOTIDE SEQUENCE [LARGE SCALE GENOMIC DNA]</scope>
    <source>
        <strain>ATCC 204508 / S288c</strain>
    </source>
</reference>
<reference key="2">
    <citation type="journal article" date="2014" name="G3 (Bethesda)">
        <title>The reference genome sequence of Saccharomyces cerevisiae: Then and now.</title>
        <authorList>
            <person name="Engel S.R."/>
            <person name="Dietrich F.S."/>
            <person name="Fisk D.G."/>
            <person name="Binkley G."/>
            <person name="Balakrishnan R."/>
            <person name="Costanzo M.C."/>
            <person name="Dwight S.S."/>
            <person name="Hitz B.C."/>
            <person name="Karra K."/>
            <person name="Nash R.S."/>
            <person name="Weng S."/>
            <person name="Wong E.D."/>
            <person name="Lloyd P."/>
            <person name="Skrzypek M.S."/>
            <person name="Miyasato S.R."/>
            <person name="Simison M."/>
            <person name="Cherry J.M."/>
        </authorList>
    </citation>
    <scope>GENOME REANNOTATION</scope>
    <source>
        <strain>ATCC 204508 / S288c</strain>
    </source>
</reference>
<protein>
    <recommendedName>
        <fullName evidence="2">Putative uncharacterized membrane protein YER067C-A</fullName>
    </recommendedName>
</protein>